<sequence>MPLRLDNASPDFASKFKAFLAMKREVAADIEAATRAIVDDVAHRGDAALLEATEKFDRLTLDAAGMRVGEAEVEAAVKACDSETVDALKLARDRIEFFHRRQLPKDDRFTDPLGVELGWRWSAIEAVGLYVPGGTAAYPSSVLMNAIPAKVAGVERVVMVVPSPGGTLNPLVLAAAQLAGATEIYRIGGAQAVAALAYGTATIAPVAKIVGPGNAYVAAAKRLVFGRVGIDMIAGPSEVVVVADKTANPDWIAADLLAQAEHDANAQSILITDSAVLAADVERALAAQLTTLPRVKIARASWDEFGAIIKVAKLEDAVPLANAIAAEHLEIMTADPEAFADKIRNAGAIFLGGHTPEAIGDYVGGSNHVLPTARSARFSSGLGVLDFMKRTSILKCGPEQLAVLGPAAMALGKAEGLDAHARSVGLRLNQR</sequence>
<accession>P60861</accession>
<reference key="1">
    <citation type="journal article" date="2004" name="Nat. Biotechnol.">
        <title>Complete genome sequence of the metabolically versatile photosynthetic bacterium Rhodopseudomonas palustris.</title>
        <authorList>
            <person name="Larimer F.W."/>
            <person name="Chain P."/>
            <person name="Hauser L."/>
            <person name="Lamerdin J.E."/>
            <person name="Malfatti S."/>
            <person name="Do L."/>
            <person name="Land M.L."/>
            <person name="Pelletier D.A."/>
            <person name="Beatty J.T."/>
            <person name="Lang A.S."/>
            <person name="Tabita F.R."/>
            <person name="Gibson J.L."/>
            <person name="Hanson T.E."/>
            <person name="Bobst C."/>
            <person name="Torres y Torres J.L."/>
            <person name="Peres C."/>
            <person name="Harrison F.H."/>
            <person name="Gibson J."/>
            <person name="Harwood C.S."/>
        </authorList>
    </citation>
    <scope>NUCLEOTIDE SEQUENCE [LARGE SCALE GENOMIC DNA]</scope>
    <source>
        <strain>ATCC BAA-98 / CGA009</strain>
    </source>
</reference>
<comment type="function">
    <text evidence="1">Catalyzes the sequential NAD-dependent oxidations of L-histidinol to L-histidinaldehyde and then to L-histidine.</text>
</comment>
<comment type="catalytic activity">
    <reaction evidence="1">
        <text>L-histidinol + 2 NAD(+) + H2O = L-histidine + 2 NADH + 3 H(+)</text>
        <dbReference type="Rhea" id="RHEA:20641"/>
        <dbReference type="ChEBI" id="CHEBI:15377"/>
        <dbReference type="ChEBI" id="CHEBI:15378"/>
        <dbReference type="ChEBI" id="CHEBI:57540"/>
        <dbReference type="ChEBI" id="CHEBI:57595"/>
        <dbReference type="ChEBI" id="CHEBI:57699"/>
        <dbReference type="ChEBI" id="CHEBI:57945"/>
        <dbReference type="EC" id="1.1.1.23"/>
    </reaction>
</comment>
<comment type="cofactor">
    <cofactor evidence="1">
        <name>Zn(2+)</name>
        <dbReference type="ChEBI" id="CHEBI:29105"/>
    </cofactor>
    <text evidence="1">Binds 1 zinc ion per subunit.</text>
</comment>
<comment type="pathway">
    <text evidence="1">Amino-acid biosynthesis; L-histidine biosynthesis; L-histidine from 5-phospho-alpha-D-ribose 1-diphosphate: step 9/9.</text>
</comment>
<comment type="similarity">
    <text evidence="1">Belongs to the histidinol dehydrogenase family.</text>
</comment>
<gene>
    <name evidence="1" type="primary">hisD</name>
    <name type="ordered locus">RPA4531</name>
</gene>
<feature type="chain" id="PRO_0000135835" description="Histidinol dehydrogenase">
    <location>
        <begin position="1"/>
        <end position="431"/>
    </location>
</feature>
<feature type="active site" description="Proton acceptor" evidence="1">
    <location>
        <position position="327"/>
    </location>
</feature>
<feature type="active site" description="Proton acceptor" evidence="1">
    <location>
        <position position="328"/>
    </location>
</feature>
<feature type="binding site" evidence="1">
    <location>
        <position position="130"/>
    </location>
    <ligand>
        <name>NAD(+)</name>
        <dbReference type="ChEBI" id="CHEBI:57540"/>
    </ligand>
</feature>
<feature type="binding site" evidence="1">
    <location>
        <position position="191"/>
    </location>
    <ligand>
        <name>NAD(+)</name>
        <dbReference type="ChEBI" id="CHEBI:57540"/>
    </ligand>
</feature>
<feature type="binding site" evidence="1">
    <location>
        <position position="214"/>
    </location>
    <ligand>
        <name>NAD(+)</name>
        <dbReference type="ChEBI" id="CHEBI:57540"/>
    </ligand>
</feature>
<feature type="binding site" evidence="1">
    <location>
        <position position="237"/>
    </location>
    <ligand>
        <name>substrate</name>
    </ligand>
</feature>
<feature type="binding site" evidence="1">
    <location>
        <position position="259"/>
    </location>
    <ligand>
        <name>substrate</name>
    </ligand>
</feature>
<feature type="binding site" evidence="1">
    <location>
        <position position="259"/>
    </location>
    <ligand>
        <name>Zn(2+)</name>
        <dbReference type="ChEBI" id="CHEBI:29105"/>
    </ligand>
</feature>
<feature type="binding site" evidence="1">
    <location>
        <position position="262"/>
    </location>
    <ligand>
        <name>substrate</name>
    </ligand>
</feature>
<feature type="binding site" evidence="1">
    <location>
        <position position="262"/>
    </location>
    <ligand>
        <name>Zn(2+)</name>
        <dbReference type="ChEBI" id="CHEBI:29105"/>
    </ligand>
</feature>
<feature type="binding site" evidence="1">
    <location>
        <position position="328"/>
    </location>
    <ligand>
        <name>substrate</name>
    </ligand>
</feature>
<feature type="binding site" evidence="1">
    <location>
        <position position="361"/>
    </location>
    <ligand>
        <name>substrate</name>
    </ligand>
</feature>
<feature type="binding site" evidence="1">
    <location>
        <position position="361"/>
    </location>
    <ligand>
        <name>Zn(2+)</name>
        <dbReference type="ChEBI" id="CHEBI:29105"/>
    </ligand>
</feature>
<feature type="binding site" evidence="1">
    <location>
        <position position="415"/>
    </location>
    <ligand>
        <name>substrate</name>
    </ligand>
</feature>
<feature type="binding site" evidence="1">
    <location>
        <position position="420"/>
    </location>
    <ligand>
        <name>substrate</name>
    </ligand>
</feature>
<feature type="binding site" evidence="1">
    <location>
        <position position="420"/>
    </location>
    <ligand>
        <name>Zn(2+)</name>
        <dbReference type="ChEBI" id="CHEBI:29105"/>
    </ligand>
</feature>
<proteinExistence type="inferred from homology"/>
<dbReference type="EC" id="1.1.1.23" evidence="1"/>
<dbReference type="EMBL" id="BX572607">
    <property type="protein sequence ID" value="CAE29971.1"/>
    <property type="molecule type" value="Genomic_DNA"/>
</dbReference>
<dbReference type="RefSeq" id="WP_011160063.1">
    <property type="nucleotide sequence ID" value="NZ_CP116810.1"/>
</dbReference>
<dbReference type="SMR" id="P60861"/>
<dbReference type="STRING" id="258594.RPA4531"/>
<dbReference type="GeneID" id="66895681"/>
<dbReference type="eggNOG" id="COG0141">
    <property type="taxonomic scope" value="Bacteria"/>
</dbReference>
<dbReference type="HOGENOM" id="CLU_006732_3_3_5"/>
<dbReference type="PhylomeDB" id="P60861"/>
<dbReference type="UniPathway" id="UPA00031">
    <property type="reaction ID" value="UER00014"/>
</dbReference>
<dbReference type="GO" id="GO:0005829">
    <property type="term" value="C:cytosol"/>
    <property type="evidence" value="ECO:0007669"/>
    <property type="project" value="TreeGrafter"/>
</dbReference>
<dbReference type="GO" id="GO:0004399">
    <property type="term" value="F:histidinol dehydrogenase activity"/>
    <property type="evidence" value="ECO:0007669"/>
    <property type="project" value="UniProtKB-UniRule"/>
</dbReference>
<dbReference type="GO" id="GO:0051287">
    <property type="term" value="F:NAD binding"/>
    <property type="evidence" value="ECO:0007669"/>
    <property type="project" value="InterPro"/>
</dbReference>
<dbReference type="GO" id="GO:0008270">
    <property type="term" value="F:zinc ion binding"/>
    <property type="evidence" value="ECO:0007669"/>
    <property type="project" value="UniProtKB-UniRule"/>
</dbReference>
<dbReference type="GO" id="GO:0000105">
    <property type="term" value="P:L-histidine biosynthetic process"/>
    <property type="evidence" value="ECO:0007669"/>
    <property type="project" value="UniProtKB-UniRule"/>
</dbReference>
<dbReference type="CDD" id="cd06572">
    <property type="entry name" value="Histidinol_dh"/>
    <property type="match status" value="1"/>
</dbReference>
<dbReference type="FunFam" id="3.40.50.1980:FF:000001">
    <property type="entry name" value="Histidinol dehydrogenase"/>
    <property type="match status" value="1"/>
</dbReference>
<dbReference type="FunFam" id="3.40.50.1980:FF:000026">
    <property type="entry name" value="Histidinol dehydrogenase"/>
    <property type="match status" value="1"/>
</dbReference>
<dbReference type="FunFam" id="1.20.5.1300:FF:000002">
    <property type="entry name" value="Histidinol dehydrogenase, chloroplastic"/>
    <property type="match status" value="1"/>
</dbReference>
<dbReference type="Gene3D" id="1.20.5.1300">
    <property type="match status" value="1"/>
</dbReference>
<dbReference type="Gene3D" id="3.40.50.1980">
    <property type="entry name" value="Nitrogenase molybdenum iron protein domain"/>
    <property type="match status" value="2"/>
</dbReference>
<dbReference type="HAMAP" id="MF_01024">
    <property type="entry name" value="HisD"/>
    <property type="match status" value="1"/>
</dbReference>
<dbReference type="InterPro" id="IPR016161">
    <property type="entry name" value="Ald_DH/histidinol_DH"/>
</dbReference>
<dbReference type="InterPro" id="IPR001692">
    <property type="entry name" value="Histidinol_DH_CS"/>
</dbReference>
<dbReference type="InterPro" id="IPR022695">
    <property type="entry name" value="Histidinol_DH_monofunct"/>
</dbReference>
<dbReference type="InterPro" id="IPR012131">
    <property type="entry name" value="Hstdl_DH"/>
</dbReference>
<dbReference type="NCBIfam" id="TIGR00069">
    <property type="entry name" value="hisD"/>
    <property type="match status" value="1"/>
</dbReference>
<dbReference type="PANTHER" id="PTHR21256:SF2">
    <property type="entry name" value="HISTIDINE BIOSYNTHESIS TRIFUNCTIONAL PROTEIN"/>
    <property type="match status" value="1"/>
</dbReference>
<dbReference type="PANTHER" id="PTHR21256">
    <property type="entry name" value="HISTIDINOL DEHYDROGENASE HDH"/>
    <property type="match status" value="1"/>
</dbReference>
<dbReference type="Pfam" id="PF00815">
    <property type="entry name" value="Histidinol_dh"/>
    <property type="match status" value="1"/>
</dbReference>
<dbReference type="PIRSF" id="PIRSF000099">
    <property type="entry name" value="Histidinol_dh"/>
    <property type="match status" value="1"/>
</dbReference>
<dbReference type="PRINTS" id="PR00083">
    <property type="entry name" value="HOLDHDRGNASE"/>
</dbReference>
<dbReference type="SUPFAM" id="SSF53720">
    <property type="entry name" value="ALDH-like"/>
    <property type="match status" value="1"/>
</dbReference>
<dbReference type="PROSITE" id="PS00611">
    <property type="entry name" value="HISOL_DEHYDROGENASE"/>
    <property type="match status" value="1"/>
</dbReference>
<organism>
    <name type="scientific">Rhodopseudomonas palustris (strain ATCC BAA-98 / CGA009)</name>
    <dbReference type="NCBI Taxonomy" id="258594"/>
    <lineage>
        <taxon>Bacteria</taxon>
        <taxon>Pseudomonadati</taxon>
        <taxon>Pseudomonadota</taxon>
        <taxon>Alphaproteobacteria</taxon>
        <taxon>Hyphomicrobiales</taxon>
        <taxon>Nitrobacteraceae</taxon>
        <taxon>Rhodopseudomonas</taxon>
    </lineage>
</organism>
<protein>
    <recommendedName>
        <fullName evidence="1">Histidinol dehydrogenase</fullName>
        <shortName evidence="1">HDH</shortName>
        <ecNumber evidence="1">1.1.1.23</ecNumber>
    </recommendedName>
</protein>
<evidence type="ECO:0000255" key="1">
    <source>
        <dbReference type="HAMAP-Rule" id="MF_01024"/>
    </source>
</evidence>
<keyword id="KW-0028">Amino-acid biosynthesis</keyword>
<keyword id="KW-0368">Histidine biosynthesis</keyword>
<keyword id="KW-0479">Metal-binding</keyword>
<keyword id="KW-0520">NAD</keyword>
<keyword id="KW-0560">Oxidoreductase</keyword>
<keyword id="KW-0862">Zinc</keyword>
<name>HISX_RHOPA</name>